<organism>
    <name type="scientific">Shigella flexneri</name>
    <dbReference type="NCBI Taxonomy" id="623"/>
    <lineage>
        <taxon>Bacteria</taxon>
        <taxon>Pseudomonadati</taxon>
        <taxon>Pseudomonadota</taxon>
        <taxon>Gammaproteobacteria</taxon>
        <taxon>Enterobacterales</taxon>
        <taxon>Enterobacteriaceae</taxon>
        <taxon>Shigella</taxon>
    </lineage>
</organism>
<feature type="signal peptide" evidence="1">
    <location>
        <begin position="1"/>
        <end position="22"/>
    </location>
</feature>
<feature type="chain" id="PRO_0000043107" description="Uncharacterized protein YgiM">
    <location>
        <begin position="23"/>
        <end position="206"/>
    </location>
</feature>
<feature type="transmembrane region" description="Helical" evidence="1">
    <location>
        <begin position="169"/>
        <end position="191"/>
    </location>
</feature>
<feature type="domain" description="SH3b" evidence="2">
    <location>
        <begin position="23"/>
        <end position="89"/>
    </location>
</feature>
<reference key="1">
    <citation type="journal article" date="2002" name="Nucleic Acids Res.">
        <title>Genome sequence of Shigella flexneri 2a: insights into pathogenicity through comparison with genomes of Escherichia coli K12 and O157.</title>
        <authorList>
            <person name="Jin Q."/>
            <person name="Yuan Z."/>
            <person name="Xu J."/>
            <person name="Wang Y."/>
            <person name="Shen Y."/>
            <person name="Lu W."/>
            <person name="Wang J."/>
            <person name="Liu H."/>
            <person name="Yang J."/>
            <person name="Yang F."/>
            <person name="Zhang X."/>
            <person name="Zhang J."/>
            <person name="Yang G."/>
            <person name="Wu H."/>
            <person name="Qu D."/>
            <person name="Dong J."/>
            <person name="Sun L."/>
            <person name="Xue Y."/>
            <person name="Zhao A."/>
            <person name="Gao Y."/>
            <person name="Zhu J."/>
            <person name="Kan B."/>
            <person name="Ding K."/>
            <person name="Chen S."/>
            <person name="Cheng H."/>
            <person name="Yao Z."/>
            <person name="He B."/>
            <person name="Chen R."/>
            <person name="Ma D."/>
            <person name="Qiang B."/>
            <person name="Wen Y."/>
            <person name="Hou Y."/>
            <person name="Yu J."/>
        </authorList>
    </citation>
    <scope>NUCLEOTIDE SEQUENCE [LARGE SCALE GENOMIC DNA]</scope>
    <source>
        <strain>301 / Serotype 2a</strain>
    </source>
</reference>
<reference key="2">
    <citation type="journal article" date="2003" name="Infect. Immun.">
        <title>Complete genome sequence and comparative genomics of Shigella flexneri serotype 2a strain 2457T.</title>
        <authorList>
            <person name="Wei J."/>
            <person name="Goldberg M.B."/>
            <person name="Burland V."/>
            <person name="Venkatesan M.M."/>
            <person name="Deng W."/>
            <person name="Fournier G."/>
            <person name="Mayhew G.F."/>
            <person name="Plunkett G. III"/>
            <person name="Rose D.J."/>
            <person name="Darling A."/>
            <person name="Mau B."/>
            <person name="Perna N.T."/>
            <person name="Payne S.M."/>
            <person name="Runyen-Janecky L.J."/>
            <person name="Zhou S."/>
            <person name="Schwartz D.C."/>
            <person name="Blattner F.R."/>
        </authorList>
    </citation>
    <scope>NUCLEOTIDE SEQUENCE [LARGE SCALE GENOMIC DNA]</scope>
    <source>
        <strain>ATCC 700930 / 2457T / Serotype 2a</strain>
    </source>
</reference>
<comment type="subcellular location">
    <subcellularLocation>
        <location evidence="3">Membrane</location>
        <topology evidence="3">Single-pass membrane protein</topology>
    </subcellularLocation>
</comment>
<comment type="similarity">
    <text evidence="3">To H.influenzae HI_1605.</text>
</comment>
<protein>
    <recommendedName>
        <fullName>Uncharacterized protein YgiM</fullName>
    </recommendedName>
</protein>
<name>YGIM_SHIFL</name>
<sequence length="206" mass="23076">MPKLRLIGLTLLALSATAVSHAEETRYVSDELNTWVRSGPGDHYRLVGTVNAGEEVTLLQTDANTNYAQVKDSSGRTAWIPLKQLSTEPSLRSRVPDLENQVKTLTDKLTNIDNTWNQRTAEMQQKVAQSDSVINGLKEENQKLKNELIVAQKKVDAASVQLDDKQRTIIMQWFMYGGGVLGLGLLLGLVLPHLIPSRKRKDRWMN</sequence>
<dbReference type="EMBL" id="AE005674">
    <property type="protein sequence ID" value="AAN44572.1"/>
    <property type="molecule type" value="Genomic_DNA"/>
</dbReference>
<dbReference type="EMBL" id="AE014073">
    <property type="protein sequence ID" value="AAP18384.1"/>
    <property type="molecule type" value="Genomic_DNA"/>
</dbReference>
<dbReference type="RefSeq" id="NP_708865.1">
    <property type="nucleotide sequence ID" value="NC_004337.2"/>
</dbReference>
<dbReference type="RefSeq" id="WP_001125331.1">
    <property type="nucleotide sequence ID" value="NZ_WPGW01000061.1"/>
</dbReference>
<dbReference type="SMR" id="P0ADU1"/>
<dbReference type="STRING" id="198214.SF3096"/>
<dbReference type="PaxDb" id="198214-SF3096"/>
<dbReference type="GeneID" id="1026697"/>
<dbReference type="KEGG" id="sfl:SF3096"/>
<dbReference type="KEGG" id="sfx:S3301"/>
<dbReference type="PATRIC" id="fig|198214.7.peg.3674"/>
<dbReference type="HOGENOM" id="CLU_094106_0_1_6"/>
<dbReference type="Proteomes" id="UP000001006">
    <property type="component" value="Chromosome"/>
</dbReference>
<dbReference type="Proteomes" id="UP000002673">
    <property type="component" value="Chromosome"/>
</dbReference>
<dbReference type="GO" id="GO:0016020">
    <property type="term" value="C:membrane"/>
    <property type="evidence" value="ECO:0007669"/>
    <property type="project" value="UniProtKB-SubCell"/>
</dbReference>
<dbReference type="FunFam" id="2.30.30.40:FF:000104">
    <property type="entry name" value="Bacterial SH3 domain protein"/>
    <property type="match status" value="1"/>
</dbReference>
<dbReference type="Gene3D" id="1.20.1170.10">
    <property type="match status" value="1"/>
</dbReference>
<dbReference type="Gene3D" id="2.30.30.40">
    <property type="entry name" value="SH3 Domains"/>
    <property type="match status" value="1"/>
</dbReference>
<dbReference type="InterPro" id="IPR003646">
    <property type="entry name" value="SH3-like_bac-type"/>
</dbReference>
<dbReference type="InterPro" id="IPR016476">
    <property type="entry name" value="SH3_dom_pro"/>
</dbReference>
<dbReference type="NCBIfam" id="TIGR04211">
    <property type="entry name" value="SH3_and_anchor"/>
    <property type="match status" value="1"/>
</dbReference>
<dbReference type="Pfam" id="PF08239">
    <property type="entry name" value="SH3_3"/>
    <property type="match status" value="1"/>
</dbReference>
<dbReference type="PIRSF" id="PIRSF006158">
    <property type="entry name" value="UCP006158_SH3"/>
    <property type="match status" value="1"/>
</dbReference>
<dbReference type="SMART" id="SM00287">
    <property type="entry name" value="SH3b"/>
    <property type="match status" value="1"/>
</dbReference>
<dbReference type="PROSITE" id="PS51781">
    <property type="entry name" value="SH3B"/>
    <property type="match status" value="1"/>
</dbReference>
<gene>
    <name type="primary">ygiM</name>
    <name type="ordered locus">SF3096</name>
    <name type="ordered locus">S3301</name>
</gene>
<keyword id="KW-0472">Membrane</keyword>
<keyword id="KW-1185">Reference proteome</keyword>
<keyword id="KW-0732">Signal</keyword>
<keyword id="KW-0812">Transmembrane</keyword>
<keyword id="KW-1133">Transmembrane helix</keyword>
<evidence type="ECO:0000255" key="1"/>
<evidence type="ECO:0000255" key="2">
    <source>
        <dbReference type="PROSITE-ProRule" id="PRU01117"/>
    </source>
</evidence>
<evidence type="ECO:0000305" key="3"/>
<accession>P0ADU1</accession>
<accession>P39202</accession>
<proteinExistence type="inferred from homology"/>